<proteinExistence type="inferred from homology"/>
<keyword id="KW-0067">ATP-binding</keyword>
<keyword id="KW-0436">Ligase</keyword>
<keyword id="KW-0547">Nucleotide-binding</keyword>
<keyword id="KW-1185">Reference proteome</keyword>
<gene>
    <name evidence="1" type="primary">epmA</name>
    <name type="synonym">yjeA</name>
    <name type="ordered locus">BU582</name>
</gene>
<name>EPMA_BUCAI</name>
<reference key="1">
    <citation type="journal article" date="2000" name="Nature">
        <title>Genome sequence of the endocellular bacterial symbiont of aphids Buchnera sp. APS.</title>
        <authorList>
            <person name="Shigenobu S."/>
            <person name="Watanabe H."/>
            <person name="Hattori M."/>
            <person name="Sakaki Y."/>
            <person name="Ishikawa H."/>
        </authorList>
    </citation>
    <scope>NUCLEOTIDE SEQUENCE [LARGE SCALE GENOMIC DNA]</scope>
    <source>
        <strain>APS</strain>
    </source>
</reference>
<evidence type="ECO:0000255" key="1">
    <source>
        <dbReference type="HAMAP-Rule" id="MF_00174"/>
    </source>
</evidence>
<feature type="chain" id="PRO_0000152716" description="Elongation factor P--(R)-beta-lysine ligase">
    <location>
        <begin position="1"/>
        <end position="324"/>
    </location>
</feature>
<feature type="binding site" evidence="1">
    <location>
        <begin position="75"/>
        <end position="77"/>
    </location>
    <ligand>
        <name>substrate</name>
    </ligand>
</feature>
<feature type="binding site" evidence="1">
    <location>
        <begin position="99"/>
        <end position="101"/>
    </location>
    <ligand>
        <name>ATP</name>
        <dbReference type="ChEBI" id="CHEBI:30616"/>
    </ligand>
</feature>
<feature type="binding site" evidence="1">
    <location>
        <position position="108"/>
    </location>
    <ligand>
        <name>ATP</name>
        <dbReference type="ChEBI" id="CHEBI:30616"/>
    </ligand>
</feature>
<feature type="binding site" evidence="1">
    <location>
        <position position="117"/>
    </location>
    <ligand>
        <name>substrate</name>
    </ligand>
</feature>
<feature type="binding site" evidence="1">
    <location>
        <begin position="243"/>
        <end position="244"/>
    </location>
    <ligand>
        <name>ATP</name>
        <dbReference type="ChEBI" id="CHEBI:30616"/>
    </ligand>
</feature>
<feature type="binding site" evidence="1">
    <location>
        <position position="250"/>
    </location>
    <ligand>
        <name>substrate</name>
    </ligand>
</feature>
<feature type="binding site" evidence="1">
    <location>
        <position position="299"/>
    </location>
    <ligand>
        <name>ATP</name>
        <dbReference type="ChEBI" id="CHEBI:30616"/>
    </ligand>
</feature>
<comment type="function">
    <text evidence="1">With EpmB is involved in the beta-lysylation step of the post-translational modification of translation elongation factor P (EF-P). Catalyzes the ATP-dependent activation of (R)-beta-lysine produced by EpmB, forming a lysyl-adenylate, from which the beta-lysyl moiety is then transferred to the epsilon-amino group of a conserved specific lysine residue in EF-P.</text>
</comment>
<comment type="catalytic activity">
    <reaction evidence="1">
        <text>D-beta-lysine + L-lysyl-[protein] + ATP = N(6)-((3R)-3,6-diaminohexanoyl)-L-lysyl-[protein] + AMP + diphosphate + H(+)</text>
        <dbReference type="Rhea" id="RHEA:83435"/>
        <dbReference type="Rhea" id="RHEA-COMP:9752"/>
        <dbReference type="Rhea" id="RHEA-COMP:20131"/>
        <dbReference type="ChEBI" id="CHEBI:15378"/>
        <dbReference type="ChEBI" id="CHEBI:29969"/>
        <dbReference type="ChEBI" id="CHEBI:30616"/>
        <dbReference type="ChEBI" id="CHEBI:33019"/>
        <dbReference type="ChEBI" id="CHEBI:84138"/>
        <dbReference type="ChEBI" id="CHEBI:156053"/>
        <dbReference type="ChEBI" id="CHEBI:456215"/>
    </reaction>
    <physiologicalReaction direction="left-to-right" evidence="1">
        <dbReference type="Rhea" id="RHEA:83436"/>
    </physiologicalReaction>
</comment>
<comment type="subunit">
    <text evidence="1">Homodimer.</text>
</comment>
<comment type="similarity">
    <text evidence="1">Belongs to the class-II aminoacyl-tRNA synthetase family. EpmA subfamily.</text>
</comment>
<protein>
    <recommendedName>
        <fullName evidence="1">Elongation factor P--(R)-beta-lysine ligase</fullName>
        <shortName evidence="1">EF-P--(R)-beta-lysine ligase</shortName>
        <ecNumber evidence="1">6.3.2.-</ecNumber>
    </recommendedName>
    <alternativeName>
        <fullName evidence="1">EF-P post-translational modification enzyme A</fullName>
    </alternativeName>
    <alternativeName>
        <fullName evidence="1">EF-P-lysine lysyltransferase</fullName>
    </alternativeName>
</protein>
<dbReference type="EC" id="6.3.2.-" evidence="1"/>
<dbReference type="EMBL" id="BA000003">
    <property type="protein sequence ID" value="BAB13271.1"/>
    <property type="molecule type" value="Genomic_DNA"/>
</dbReference>
<dbReference type="RefSeq" id="NP_240385.1">
    <property type="nucleotide sequence ID" value="NC_002528.1"/>
</dbReference>
<dbReference type="RefSeq" id="WP_010896173.1">
    <property type="nucleotide sequence ID" value="NC_002528.1"/>
</dbReference>
<dbReference type="SMR" id="P57642"/>
<dbReference type="STRING" id="563178.BUAP5A_575"/>
<dbReference type="EnsemblBacteria" id="BAB13271">
    <property type="protein sequence ID" value="BAB13271"/>
    <property type="gene ID" value="BAB13271"/>
</dbReference>
<dbReference type="KEGG" id="buc:BU582"/>
<dbReference type="PATRIC" id="fig|107806.10.peg.587"/>
<dbReference type="eggNOG" id="COG2269">
    <property type="taxonomic scope" value="Bacteria"/>
</dbReference>
<dbReference type="HOGENOM" id="CLU_008255_1_1_6"/>
<dbReference type="Proteomes" id="UP000001806">
    <property type="component" value="Chromosome"/>
</dbReference>
<dbReference type="GO" id="GO:0005829">
    <property type="term" value="C:cytosol"/>
    <property type="evidence" value="ECO:0007669"/>
    <property type="project" value="TreeGrafter"/>
</dbReference>
<dbReference type="GO" id="GO:0016880">
    <property type="term" value="F:acid-ammonia (or amide) ligase activity"/>
    <property type="evidence" value="ECO:0007669"/>
    <property type="project" value="UniProtKB-UniRule"/>
</dbReference>
<dbReference type="GO" id="GO:0005524">
    <property type="term" value="F:ATP binding"/>
    <property type="evidence" value="ECO:0007669"/>
    <property type="project" value="UniProtKB-UniRule"/>
</dbReference>
<dbReference type="GO" id="GO:0004824">
    <property type="term" value="F:lysine-tRNA ligase activity"/>
    <property type="evidence" value="ECO:0007669"/>
    <property type="project" value="InterPro"/>
</dbReference>
<dbReference type="GO" id="GO:0000049">
    <property type="term" value="F:tRNA binding"/>
    <property type="evidence" value="ECO:0007669"/>
    <property type="project" value="TreeGrafter"/>
</dbReference>
<dbReference type="GO" id="GO:0006430">
    <property type="term" value="P:lysyl-tRNA aminoacylation"/>
    <property type="evidence" value="ECO:0007669"/>
    <property type="project" value="InterPro"/>
</dbReference>
<dbReference type="FunFam" id="3.30.930.10:FF:000017">
    <property type="entry name" value="Elongation factor P--(R)-beta-lysine ligase"/>
    <property type="match status" value="1"/>
</dbReference>
<dbReference type="Gene3D" id="3.30.930.10">
    <property type="entry name" value="Bira Bifunctional Protein, Domain 2"/>
    <property type="match status" value="1"/>
</dbReference>
<dbReference type="HAMAP" id="MF_00174">
    <property type="entry name" value="EF_P_modif_A"/>
    <property type="match status" value="1"/>
</dbReference>
<dbReference type="InterPro" id="IPR004364">
    <property type="entry name" value="Aa-tRNA-synt_II"/>
</dbReference>
<dbReference type="InterPro" id="IPR006195">
    <property type="entry name" value="aa-tRNA-synth_II"/>
</dbReference>
<dbReference type="InterPro" id="IPR045864">
    <property type="entry name" value="aa-tRNA-synth_II/BPL/LPL"/>
</dbReference>
<dbReference type="InterPro" id="IPR004525">
    <property type="entry name" value="EpmA"/>
</dbReference>
<dbReference type="InterPro" id="IPR018149">
    <property type="entry name" value="Lys-tRNA-synth_II_C"/>
</dbReference>
<dbReference type="NCBIfam" id="TIGR00462">
    <property type="entry name" value="genX"/>
    <property type="match status" value="1"/>
</dbReference>
<dbReference type="NCBIfam" id="NF006828">
    <property type="entry name" value="PRK09350.1"/>
    <property type="match status" value="1"/>
</dbReference>
<dbReference type="PANTHER" id="PTHR42918:SF6">
    <property type="entry name" value="ELONGATION FACTOR P--(R)-BETA-LYSINE LIGASE"/>
    <property type="match status" value="1"/>
</dbReference>
<dbReference type="PANTHER" id="PTHR42918">
    <property type="entry name" value="LYSYL-TRNA SYNTHETASE"/>
    <property type="match status" value="1"/>
</dbReference>
<dbReference type="Pfam" id="PF00152">
    <property type="entry name" value="tRNA-synt_2"/>
    <property type="match status" value="1"/>
</dbReference>
<dbReference type="PRINTS" id="PR00982">
    <property type="entry name" value="TRNASYNTHLYS"/>
</dbReference>
<dbReference type="SUPFAM" id="SSF55681">
    <property type="entry name" value="Class II aaRS and biotin synthetases"/>
    <property type="match status" value="1"/>
</dbReference>
<dbReference type="PROSITE" id="PS50862">
    <property type="entry name" value="AA_TRNA_LIGASE_II"/>
    <property type="match status" value="1"/>
</dbReference>
<organism>
    <name type="scientific">Buchnera aphidicola subsp. Acyrthosiphon pisum (strain APS)</name>
    <name type="common">Acyrthosiphon pisum symbiotic bacterium</name>
    <dbReference type="NCBI Taxonomy" id="107806"/>
    <lineage>
        <taxon>Bacteria</taxon>
        <taxon>Pseudomonadati</taxon>
        <taxon>Pseudomonadota</taxon>
        <taxon>Gammaproteobacteria</taxon>
        <taxon>Enterobacterales</taxon>
        <taxon>Erwiniaceae</taxon>
        <taxon>Buchnera</taxon>
    </lineage>
</organism>
<accession>P57642</accession>
<sequence length="324" mass="37898">MKKKIWKSSASIEDLIKRSNIISNIRLFFSKKNILEVETPILSRSTVTDVHLTSFETNYISSDNIDELKLWLTTSPEYHMKRLLASESGSIYQICHSFRNKEIGRYHNPEFTMLEWYQPFCSMKKFIKEIDIFLQIILKCNKSDKVSYQDLFIDFLKIDPLCTNLLELHQISKKLKLDHLTHSENNLNKLIQLLFTLKIEPNIGKEKPLFVYHFPAEQASLAAINLKDPRISERFEIFFKGIELGNGFYELIDVNEQKKRFIRDNKERRSMNLPTRKIDNFFLSALSYGLPPCSGVAIGLDRLIMLILNKKSIHEVIAFPVDRC</sequence>